<protein>
    <recommendedName>
        <fullName>Orotidine 5'-phosphate decarboxylase</fullName>
        <ecNumber>4.1.1.23</ecNumber>
    </recommendedName>
    <alternativeName>
        <fullName>OMP decarboxylase</fullName>
        <shortName>OMPDCase</shortName>
        <shortName>OMPdecase</shortName>
    </alternativeName>
</protein>
<reference key="1">
    <citation type="journal article" date="2002" name="Proc. Natl. Acad. Sci. U.S.A.">
        <title>Complete genome sequence of Clostridium perfringens, an anaerobic flesh-eater.</title>
        <authorList>
            <person name="Shimizu T."/>
            <person name="Ohtani K."/>
            <person name="Hirakawa H."/>
            <person name="Ohshima K."/>
            <person name="Yamashita A."/>
            <person name="Shiba T."/>
            <person name="Ogasawara N."/>
            <person name="Hattori M."/>
            <person name="Kuhara S."/>
            <person name="Hayashi H."/>
        </authorList>
    </citation>
    <scope>NUCLEOTIDE SEQUENCE [LARGE SCALE GENOMIC DNA]</scope>
    <source>
        <strain>13 / Type A</strain>
    </source>
</reference>
<sequence>MIADKLFEKVEKNGVVCVGLDTSLDYIPEEFKSKFSNESDMLFAFNKEIIDATLDVSACFKVQIAYYEALGLKGLEAYKNTLSYLREKNALIIADIKRGDIAATAKMYAKAHFEGDFESDFITLNPYMGMDSIDPYLPYIEKNEKGVFVLVRTSNKGAEDIEYLEAGHGKKVYDVVGEKLNTLGKNYLGKHGYSSIGGVVGCTHQEEAKEMRDKLDTMPFLIPGYGAQGGTAKDVAAYLKNGNGGIVNSSRKILLAYKAMEDNKNFAECARKEAISMRDSIREAILK</sequence>
<evidence type="ECO:0000250" key="1"/>
<evidence type="ECO:0000305" key="2"/>
<gene>
    <name type="primary">pyrF</name>
    <name type="ordered locus">CPE1180</name>
</gene>
<dbReference type="EC" id="4.1.1.23"/>
<dbReference type="EMBL" id="BA000016">
    <property type="protein sequence ID" value="BAB80886.1"/>
    <property type="molecule type" value="Genomic_DNA"/>
</dbReference>
<dbReference type="RefSeq" id="WP_003481260.1">
    <property type="nucleotide sequence ID" value="NC_003366.1"/>
</dbReference>
<dbReference type="SMR" id="Q8XL62"/>
<dbReference type="STRING" id="195102.gene:10490443"/>
<dbReference type="KEGG" id="cpe:CPE1180"/>
<dbReference type="HOGENOM" id="CLU_060704_1_1_9"/>
<dbReference type="UniPathway" id="UPA00070">
    <property type="reaction ID" value="UER00120"/>
</dbReference>
<dbReference type="Proteomes" id="UP000000818">
    <property type="component" value="Chromosome"/>
</dbReference>
<dbReference type="GO" id="GO:0004590">
    <property type="term" value="F:orotidine-5'-phosphate decarboxylase activity"/>
    <property type="evidence" value="ECO:0007669"/>
    <property type="project" value="UniProtKB-UniRule"/>
</dbReference>
<dbReference type="GO" id="GO:0006207">
    <property type="term" value="P:'de novo' pyrimidine nucleobase biosynthetic process"/>
    <property type="evidence" value="ECO:0007669"/>
    <property type="project" value="InterPro"/>
</dbReference>
<dbReference type="GO" id="GO:0044205">
    <property type="term" value="P:'de novo' UMP biosynthetic process"/>
    <property type="evidence" value="ECO:0007669"/>
    <property type="project" value="UniProtKB-UniRule"/>
</dbReference>
<dbReference type="CDD" id="cd04725">
    <property type="entry name" value="OMP_decarboxylase_like"/>
    <property type="match status" value="1"/>
</dbReference>
<dbReference type="FunFam" id="3.20.20.70:FF:000246">
    <property type="entry name" value="Orotidine 5'-phosphate decarboxylase"/>
    <property type="match status" value="1"/>
</dbReference>
<dbReference type="Gene3D" id="3.20.20.70">
    <property type="entry name" value="Aldolase class I"/>
    <property type="match status" value="1"/>
</dbReference>
<dbReference type="HAMAP" id="MF_01215">
    <property type="entry name" value="OMPdecase_type2"/>
    <property type="match status" value="1"/>
</dbReference>
<dbReference type="InterPro" id="IPR013785">
    <property type="entry name" value="Aldolase_TIM"/>
</dbReference>
<dbReference type="InterPro" id="IPR018089">
    <property type="entry name" value="OMPdecase_AS"/>
</dbReference>
<dbReference type="InterPro" id="IPR011995">
    <property type="entry name" value="OMPdecase_type-2"/>
</dbReference>
<dbReference type="InterPro" id="IPR001754">
    <property type="entry name" value="OMPdeCOase_dom"/>
</dbReference>
<dbReference type="InterPro" id="IPR011060">
    <property type="entry name" value="RibuloseP-bd_barrel"/>
</dbReference>
<dbReference type="NCBIfam" id="TIGR02127">
    <property type="entry name" value="pyrF_sub2"/>
    <property type="match status" value="1"/>
</dbReference>
<dbReference type="PANTHER" id="PTHR43375">
    <property type="entry name" value="OROTIDINE 5'-PHOSPHATE DECARBOXYLASE"/>
    <property type="match status" value="1"/>
</dbReference>
<dbReference type="PANTHER" id="PTHR43375:SF1">
    <property type="entry name" value="OROTIDINE 5'-PHOSPHATE DECARBOXYLASE"/>
    <property type="match status" value="1"/>
</dbReference>
<dbReference type="Pfam" id="PF00215">
    <property type="entry name" value="OMPdecase"/>
    <property type="match status" value="1"/>
</dbReference>
<dbReference type="SMART" id="SM00934">
    <property type="entry name" value="OMPdecase"/>
    <property type="match status" value="1"/>
</dbReference>
<dbReference type="SUPFAM" id="SSF51366">
    <property type="entry name" value="Ribulose-phoshate binding barrel"/>
    <property type="match status" value="1"/>
</dbReference>
<dbReference type="PROSITE" id="PS00156">
    <property type="entry name" value="OMPDECASE"/>
    <property type="match status" value="1"/>
</dbReference>
<comment type="catalytic activity">
    <reaction>
        <text>orotidine 5'-phosphate + H(+) = UMP + CO2</text>
        <dbReference type="Rhea" id="RHEA:11596"/>
        <dbReference type="ChEBI" id="CHEBI:15378"/>
        <dbReference type="ChEBI" id="CHEBI:16526"/>
        <dbReference type="ChEBI" id="CHEBI:57538"/>
        <dbReference type="ChEBI" id="CHEBI:57865"/>
        <dbReference type="EC" id="4.1.1.23"/>
    </reaction>
</comment>
<comment type="pathway">
    <text>Pyrimidine metabolism; UMP biosynthesis via de novo pathway; UMP from orotate: step 2/2.</text>
</comment>
<comment type="similarity">
    <text evidence="2">Belongs to the OMP decarboxylase family. Type 2 subfamily.</text>
</comment>
<keyword id="KW-0210">Decarboxylase</keyword>
<keyword id="KW-0456">Lyase</keyword>
<keyword id="KW-0665">Pyrimidine biosynthesis</keyword>
<keyword id="KW-1185">Reference proteome</keyword>
<name>PYRF_CLOPE</name>
<proteinExistence type="inferred from homology"/>
<accession>Q8XL62</accession>
<organism>
    <name type="scientific">Clostridium perfringens (strain 13 / Type A)</name>
    <dbReference type="NCBI Taxonomy" id="195102"/>
    <lineage>
        <taxon>Bacteria</taxon>
        <taxon>Bacillati</taxon>
        <taxon>Bacillota</taxon>
        <taxon>Clostridia</taxon>
        <taxon>Eubacteriales</taxon>
        <taxon>Clostridiaceae</taxon>
        <taxon>Clostridium</taxon>
    </lineage>
</organism>
<feature type="chain" id="PRO_0000134623" description="Orotidine 5'-phosphate decarboxylase">
    <location>
        <begin position="1"/>
        <end position="287"/>
    </location>
</feature>
<feature type="active site" description="Proton donor" evidence="1">
    <location>
        <position position="97"/>
    </location>
</feature>